<sequence length="427" mass="47710">MAKTIQAIRGMNDCLPEISGTWQKVESVLRQVVASYGYQEIRTPIVESTDLFKRSIGEVTDIVEKEMYTFEDRNGDSLTLRPEGTASCVRAGNEHGLLYNQQQRLWYMGPMFRHERPQKGRYRQFHQFGVETYGMDGPDIDLEVILLSARFWKSFGIEQHVKLQINTLGSNEARAAYRDTLVAFLKERADQLDEDSLRRLETNPLRVLDSKNPDVQAAIADAPALIDHLDDESKAHFDTLCARLTQAGIEFEINPRLVRGLDYYNRTVFEWVTDSLGAQGTVCAGGRYDGLVEQLGGKATPAVGFAMGIERLVLLLTTLTEEGQDTSFADVYVTAMGDDAQPYAIEVSEALRNALPNIRIMMHCGGGNFKKQLKRADKTGARLALLLGSDEMQSREVGVKPLRDGQEQVTVSFDTLADKVAEMLSAK</sequence>
<feature type="chain" id="PRO_1000095527" description="Histidine--tRNA ligase">
    <location>
        <begin position="1"/>
        <end position="427"/>
    </location>
</feature>
<keyword id="KW-0030">Aminoacyl-tRNA synthetase</keyword>
<keyword id="KW-0067">ATP-binding</keyword>
<keyword id="KW-0963">Cytoplasm</keyword>
<keyword id="KW-0436">Ligase</keyword>
<keyword id="KW-0547">Nucleotide-binding</keyword>
<keyword id="KW-0648">Protein biosynthesis</keyword>
<name>SYH_ALTMD</name>
<reference key="1">
    <citation type="journal article" date="2008" name="ISME J.">
        <title>Comparative genomics of two ecotypes of the marine planktonic copiotroph Alteromonas macleodii suggests alternative lifestyles associated with different kinds of particulate organic matter.</title>
        <authorList>
            <person name="Ivars-Martinez E."/>
            <person name="Martin-Cuadrado A.-B."/>
            <person name="D'Auria G."/>
            <person name="Mira A."/>
            <person name="Ferriera S."/>
            <person name="Johnson J."/>
            <person name="Friedman R."/>
            <person name="Rodriguez-Valera F."/>
        </authorList>
    </citation>
    <scope>NUCLEOTIDE SEQUENCE [LARGE SCALE GENOMIC DNA]</scope>
    <source>
        <strain>DSM 17117 / CIP 110805 / LMG 28347 / Deep ecotype</strain>
    </source>
</reference>
<evidence type="ECO:0000255" key="1">
    <source>
        <dbReference type="HAMAP-Rule" id="MF_00127"/>
    </source>
</evidence>
<gene>
    <name evidence="1" type="primary">hisS</name>
    <name type="ordered locus">MADE_1005220</name>
</gene>
<dbReference type="EC" id="6.1.1.21" evidence="1"/>
<dbReference type="EMBL" id="CP001103">
    <property type="protein sequence ID" value="AEA97190.1"/>
    <property type="molecule type" value="Genomic_DNA"/>
</dbReference>
<dbReference type="RefSeq" id="WP_012517544.1">
    <property type="nucleotide sequence ID" value="NC_011138.3"/>
</dbReference>
<dbReference type="SMR" id="B4RV88"/>
<dbReference type="GeneID" id="56343085"/>
<dbReference type="KEGG" id="amc:MADE_1005220"/>
<dbReference type="HOGENOM" id="CLU_025113_1_1_6"/>
<dbReference type="Proteomes" id="UP000001870">
    <property type="component" value="Chromosome"/>
</dbReference>
<dbReference type="GO" id="GO:0005737">
    <property type="term" value="C:cytoplasm"/>
    <property type="evidence" value="ECO:0007669"/>
    <property type="project" value="UniProtKB-SubCell"/>
</dbReference>
<dbReference type="GO" id="GO:0005524">
    <property type="term" value="F:ATP binding"/>
    <property type="evidence" value="ECO:0007669"/>
    <property type="project" value="UniProtKB-UniRule"/>
</dbReference>
<dbReference type="GO" id="GO:0004821">
    <property type="term" value="F:histidine-tRNA ligase activity"/>
    <property type="evidence" value="ECO:0007669"/>
    <property type="project" value="UniProtKB-UniRule"/>
</dbReference>
<dbReference type="GO" id="GO:0006427">
    <property type="term" value="P:histidyl-tRNA aminoacylation"/>
    <property type="evidence" value="ECO:0007669"/>
    <property type="project" value="UniProtKB-UniRule"/>
</dbReference>
<dbReference type="CDD" id="cd00773">
    <property type="entry name" value="HisRS-like_core"/>
    <property type="match status" value="1"/>
</dbReference>
<dbReference type="CDD" id="cd00859">
    <property type="entry name" value="HisRS_anticodon"/>
    <property type="match status" value="1"/>
</dbReference>
<dbReference type="FunFam" id="3.30.930.10:FF:000005">
    <property type="entry name" value="Histidine--tRNA ligase"/>
    <property type="match status" value="1"/>
</dbReference>
<dbReference type="Gene3D" id="3.40.50.800">
    <property type="entry name" value="Anticodon-binding domain"/>
    <property type="match status" value="1"/>
</dbReference>
<dbReference type="Gene3D" id="3.30.930.10">
    <property type="entry name" value="Bira Bifunctional Protein, Domain 2"/>
    <property type="match status" value="1"/>
</dbReference>
<dbReference type="HAMAP" id="MF_00127">
    <property type="entry name" value="His_tRNA_synth"/>
    <property type="match status" value="1"/>
</dbReference>
<dbReference type="InterPro" id="IPR006195">
    <property type="entry name" value="aa-tRNA-synth_II"/>
</dbReference>
<dbReference type="InterPro" id="IPR045864">
    <property type="entry name" value="aa-tRNA-synth_II/BPL/LPL"/>
</dbReference>
<dbReference type="InterPro" id="IPR004154">
    <property type="entry name" value="Anticodon-bd"/>
</dbReference>
<dbReference type="InterPro" id="IPR036621">
    <property type="entry name" value="Anticodon-bd_dom_sf"/>
</dbReference>
<dbReference type="InterPro" id="IPR015807">
    <property type="entry name" value="His-tRNA-ligase"/>
</dbReference>
<dbReference type="InterPro" id="IPR041715">
    <property type="entry name" value="HisRS-like_core"/>
</dbReference>
<dbReference type="InterPro" id="IPR004516">
    <property type="entry name" value="HisRS/HisZ"/>
</dbReference>
<dbReference type="InterPro" id="IPR033656">
    <property type="entry name" value="HisRS_anticodon"/>
</dbReference>
<dbReference type="NCBIfam" id="TIGR00442">
    <property type="entry name" value="hisS"/>
    <property type="match status" value="1"/>
</dbReference>
<dbReference type="PANTHER" id="PTHR43707:SF1">
    <property type="entry name" value="HISTIDINE--TRNA LIGASE, MITOCHONDRIAL-RELATED"/>
    <property type="match status" value="1"/>
</dbReference>
<dbReference type="PANTHER" id="PTHR43707">
    <property type="entry name" value="HISTIDYL-TRNA SYNTHETASE"/>
    <property type="match status" value="1"/>
</dbReference>
<dbReference type="Pfam" id="PF03129">
    <property type="entry name" value="HGTP_anticodon"/>
    <property type="match status" value="1"/>
</dbReference>
<dbReference type="Pfam" id="PF13393">
    <property type="entry name" value="tRNA-synt_His"/>
    <property type="match status" value="1"/>
</dbReference>
<dbReference type="PIRSF" id="PIRSF001549">
    <property type="entry name" value="His-tRNA_synth"/>
    <property type="match status" value="1"/>
</dbReference>
<dbReference type="SUPFAM" id="SSF52954">
    <property type="entry name" value="Class II aaRS ABD-related"/>
    <property type="match status" value="1"/>
</dbReference>
<dbReference type="SUPFAM" id="SSF55681">
    <property type="entry name" value="Class II aaRS and biotin synthetases"/>
    <property type="match status" value="1"/>
</dbReference>
<dbReference type="PROSITE" id="PS50862">
    <property type="entry name" value="AA_TRNA_LIGASE_II"/>
    <property type="match status" value="1"/>
</dbReference>
<organism>
    <name type="scientific">Alteromonas mediterranea (strain DSM 17117 / CIP 110805 / LMG 28347 / Deep ecotype)</name>
    <dbReference type="NCBI Taxonomy" id="1774373"/>
    <lineage>
        <taxon>Bacteria</taxon>
        <taxon>Pseudomonadati</taxon>
        <taxon>Pseudomonadota</taxon>
        <taxon>Gammaproteobacteria</taxon>
        <taxon>Alteromonadales</taxon>
        <taxon>Alteromonadaceae</taxon>
        <taxon>Alteromonas/Salinimonas group</taxon>
        <taxon>Alteromonas</taxon>
    </lineage>
</organism>
<accession>B4RV88</accession>
<accession>F2G256</accession>
<protein>
    <recommendedName>
        <fullName evidence="1">Histidine--tRNA ligase</fullName>
        <ecNumber evidence="1">6.1.1.21</ecNumber>
    </recommendedName>
    <alternativeName>
        <fullName evidence="1">Histidyl-tRNA synthetase</fullName>
        <shortName evidence="1">HisRS</shortName>
    </alternativeName>
</protein>
<proteinExistence type="inferred from homology"/>
<comment type="catalytic activity">
    <reaction evidence="1">
        <text>tRNA(His) + L-histidine + ATP = L-histidyl-tRNA(His) + AMP + diphosphate + H(+)</text>
        <dbReference type="Rhea" id="RHEA:17313"/>
        <dbReference type="Rhea" id="RHEA-COMP:9665"/>
        <dbReference type="Rhea" id="RHEA-COMP:9689"/>
        <dbReference type="ChEBI" id="CHEBI:15378"/>
        <dbReference type="ChEBI" id="CHEBI:30616"/>
        <dbReference type="ChEBI" id="CHEBI:33019"/>
        <dbReference type="ChEBI" id="CHEBI:57595"/>
        <dbReference type="ChEBI" id="CHEBI:78442"/>
        <dbReference type="ChEBI" id="CHEBI:78527"/>
        <dbReference type="ChEBI" id="CHEBI:456215"/>
        <dbReference type="EC" id="6.1.1.21"/>
    </reaction>
</comment>
<comment type="subunit">
    <text evidence="1">Homodimer.</text>
</comment>
<comment type="subcellular location">
    <subcellularLocation>
        <location evidence="1">Cytoplasm</location>
    </subcellularLocation>
</comment>
<comment type="similarity">
    <text evidence="1">Belongs to the class-II aminoacyl-tRNA synthetase family.</text>
</comment>